<keyword id="KW-1185">Reference proteome</keyword>
<keyword id="KW-0687">Ribonucleoprotein</keyword>
<keyword id="KW-0689">Ribosomal protein</keyword>
<keyword id="KW-0694">RNA-binding</keyword>
<keyword id="KW-0699">rRNA-binding</keyword>
<name>RS8_PHYMT</name>
<evidence type="ECO:0000255" key="1">
    <source>
        <dbReference type="HAMAP-Rule" id="MF_01302"/>
    </source>
</evidence>
<evidence type="ECO:0000305" key="2"/>
<sequence>MVMTDNIADMLTRIRNANQMHHLQVVVPISKLKVEILKVLKEEGFIKNFFIKEFKREIIISLKYTIERERVIKGLKKISKPGLKVYTSVEKIPKVLSGLGIALISTNKGILTDNKARLEKVGGEVLAYIW</sequence>
<proteinExistence type="inferred from homology"/>
<protein>
    <recommendedName>
        <fullName evidence="1">Small ribosomal subunit protein uS8</fullName>
    </recommendedName>
    <alternativeName>
        <fullName evidence="2">30S ribosomal protein S8</fullName>
    </alternativeName>
</protein>
<gene>
    <name evidence="1" type="primary">rpsH</name>
    <name type="ordered locus">ATP_00355</name>
</gene>
<dbReference type="EMBL" id="CU469464">
    <property type="protein sequence ID" value="CAP18542.1"/>
    <property type="molecule type" value="Genomic_DNA"/>
</dbReference>
<dbReference type="SMR" id="B3R005"/>
<dbReference type="STRING" id="37692.ATP_00355"/>
<dbReference type="KEGG" id="pml:ATP_00355"/>
<dbReference type="eggNOG" id="COG0096">
    <property type="taxonomic scope" value="Bacteria"/>
</dbReference>
<dbReference type="HOGENOM" id="CLU_098428_0_2_14"/>
<dbReference type="Proteomes" id="UP000002020">
    <property type="component" value="Chromosome"/>
</dbReference>
<dbReference type="GO" id="GO:1990904">
    <property type="term" value="C:ribonucleoprotein complex"/>
    <property type="evidence" value="ECO:0007669"/>
    <property type="project" value="UniProtKB-KW"/>
</dbReference>
<dbReference type="GO" id="GO:0005840">
    <property type="term" value="C:ribosome"/>
    <property type="evidence" value="ECO:0007669"/>
    <property type="project" value="UniProtKB-KW"/>
</dbReference>
<dbReference type="GO" id="GO:0019843">
    <property type="term" value="F:rRNA binding"/>
    <property type="evidence" value="ECO:0007669"/>
    <property type="project" value="UniProtKB-UniRule"/>
</dbReference>
<dbReference type="GO" id="GO:0003735">
    <property type="term" value="F:structural constituent of ribosome"/>
    <property type="evidence" value="ECO:0007669"/>
    <property type="project" value="InterPro"/>
</dbReference>
<dbReference type="GO" id="GO:0006412">
    <property type="term" value="P:translation"/>
    <property type="evidence" value="ECO:0007669"/>
    <property type="project" value="UniProtKB-UniRule"/>
</dbReference>
<dbReference type="FunFam" id="3.30.1370.30:FF:000002">
    <property type="entry name" value="30S ribosomal protein S8"/>
    <property type="match status" value="1"/>
</dbReference>
<dbReference type="FunFam" id="3.30.1490.10:FF:000001">
    <property type="entry name" value="30S ribosomal protein S8"/>
    <property type="match status" value="1"/>
</dbReference>
<dbReference type="Gene3D" id="3.30.1370.30">
    <property type="match status" value="1"/>
</dbReference>
<dbReference type="Gene3D" id="3.30.1490.10">
    <property type="match status" value="1"/>
</dbReference>
<dbReference type="HAMAP" id="MF_01302_B">
    <property type="entry name" value="Ribosomal_uS8_B"/>
    <property type="match status" value="1"/>
</dbReference>
<dbReference type="InterPro" id="IPR000630">
    <property type="entry name" value="Ribosomal_uS8"/>
</dbReference>
<dbReference type="InterPro" id="IPR047863">
    <property type="entry name" value="Ribosomal_uS8_CS"/>
</dbReference>
<dbReference type="InterPro" id="IPR035987">
    <property type="entry name" value="Ribosomal_uS8_sf"/>
</dbReference>
<dbReference type="NCBIfam" id="NF001109">
    <property type="entry name" value="PRK00136.1"/>
    <property type="match status" value="1"/>
</dbReference>
<dbReference type="PANTHER" id="PTHR11758">
    <property type="entry name" value="40S RIBOSOMAL PROTEIN S15A"/>
    <property type="match status" value="1"/>
</dbReference>
<dbReference type="Pfam" id="PF00410">
    <property type="entry name" value="Ribosomal_S8"/>
    <property type="match status" value="1"/>
</dbReference>
<dbReference type="SUPFAM" id="SSF56047">
    <property type="entry name" value="Ribosomal protein S8"/>
    <property type="match status" value="1"/>
</dbReference>
<dbReference type="PROSITE" id="PS00053">
    <property type="entry name" value="RIBOSOMAL_S8"/>
    <property type="match status" value="1"/>
</dbReference>
<feature type="chain" id="PRO_1000165345" description="Small ribosomal subunit protein uS8">
    <location>
        <begin position="1"/>
        <end position="130"/>
    </location>
</feature>
<organism>
    <name type="scientific">Phytoplasma mali (strain AT)</name>
    <dbReference type="NCBI Taxonomy" id="482235"/>
    <lineage>
        <taxon>Bacteria</taxon>
        <taxon>Bacillati</taxon>
        <taxon>Mycoplasmatota</taxon>
        <taxon>Mollicutes</taxon>
        <taxon>Acholeplasmatales</taxon>
        <taxon>Acholeplasmataceae</taxon>
        <taxon>Candidatus Phytoplasma</taxon>
        <taxon>16SrX (Apple proliferation group)</taxon>
    </lineage>
</organism>
<comment type="function">
    <text evidence="1">One of the primary rRNA binding proteins, it binds directly to 16S rRNA central domain where it helps coordinate assembly of the platform of the 30S subunit.</text>
</comment>
<comment type="subunit">
    <text evidence="1">Part of the 30S ribosomal subunit. Contacts proteins S5 and S12.</text>
</comment>
<comment type="similarity">
    <text evidence="1">Belongs to the universal ribosomal protein uS8 family.</text>
</comment>
<reference key="1">
    <citation type="journal article" date="2008" name="BMC Genomics">
        <title>The linear chromosome of the plant-pathogenic mycoplasma 'Candidatus Phytoplasma mali'.</title>
        <authorList>
            <person name="Kube M."/>
            <person name="Schneider B."/>
            <person name="Kuhl H."/>
            <person name="Dandekar T."/>
            <person name="Heitmann K."/>
            <person name="Migdoll A.M."/>
            <person name="Reinhardt R."/>
            <person name="Seemueller E."/>
        </authorList>
    </citation>
    <scope>NUCLEOTIDE SEQUENCE [LARGE SCALE GENOMIC DNA]</scope>
    <source>
        <strain>AT</strain>
    </source>
</reference>
<accession>B3R005</accession>